<evidence type="ECO:0000255" key="1">
    <source>
        <dbReference type="HAMAP-Rule" id="MF_00001"/>
    </source>
</evidence>
<protein>
    <recommendedName>
        <fullName evidence="1">Aspartate carbamoyltransferase catalytic subunit</fullName>
        <ecNumber evidence="1">2.1.3.2</ecNumber>
    </recommendedName>
    <alternativeName>
        <fullName evidence="1">Aspartate transcarbamylase</fullName>
        <shortName evidence="1">ATCase</shortName>
    </alternativeName>
</protein>
<comment type="function">
    <text evidence="1">Catalyzes the condensation of carbamoyl phosphate and aspartate to form carbamoyl aspartate and inorganic phosphate, the committed step in the de novo pyrimidine nucleotide biosynthesis pathway.</text>
</comment>
<comment type="catalytic activity">
    <reaction evidence="1">
        <text>carbamoyl phosphate + L-aspartate = N-carbamoyl-L-aspartate + phosphate + H(+)</text>
        <dbReference type="Rhea" id="RHEA:20013"/>
        <dbReference type="ChEBI" id="CHEBI:15378"/>
        <dbReference type="ChEBI" id="CHEBI:29991"/>
        <dbReference type="ChEBI" id="CHEBI:32814"/>
        <dbReference type="ChEBI" id="CHEBI:43474"/>
        <dbReference type="ChEBI" id="CHEBI:58228"/>
        <dbReference type="EC" id="2.1.3.2"/>
    </reaction>
</comment>
<comment type="pathway">
    <text evidence="1">Pyrimidine metabolism; UMP biosynthesis via de novo pathway; (S)-dihydroorotate from bicarbonate: step 2/3.</text>
</comment>
<comment type="subunit">
    <text evidence="1">Heterododecamer (2C3:3R2) of six catalytic PyrB chains organized as two trimers (C3), and six regulatory PyrI chains organized as three dimers (R2).</text>
</comment>
<comment type="similarity">
    <text evidence="1">Belongs to the aspartate/ornithine carbamoyltransferase superfamily. ATCase family.</text>
</comment>
<organism>
    <name type="scientific">Prochlorococcus marinus (strain SARG / CCMP1375 / SS120)</name>
    <dbReference type="NCBI Taxonomy" id="167539"/>
    <lineage>
        <taxon>Bacteria</taxon>
        <taxon>Bacillati</taxon>
        <taxon>Cyanobacteriota</taxon>
        <taxon>Cyanophyceae</taxon>
        <taxon>Synechococcales</taxon>
        <taxon>Prochlorococcaceae</taxon>
        <taxon>Prochlorococcus</taxon>
    </lineage>
</organism>
<sequence length="338" mass="37154">MSNWSHKHILDLSSFSIEDYQTVVELANRFKTIPRSGSRKLPALQGRLIATLFFEPSTRTRSSFELAAKRLSADVQSFAPSNSSLIKGETPLDTVMTYVAMGAHVLVVRHGGTGVPEQLAKSLDQKKKNVSILNGGDGLHSHPSQGLLDLFTLTQFFNKESPSPRNIAGKRIAIVGDILHSRVARSNLWSLTACGANVVLCGPPSLLPDDFAKFVEAPPSGQKKDPIKNRGKVTISRCLKEALTDTDAVITLRLQKERMSENLLSNLDKYHNEYGITHESLKWCGKHVPVLHPGPVNRGIEMSSELLEDNSISLIENQVSNGIPIRMALLYLLSADKN</sequence>
<name>PYRB_PROMA</name>
<keyword id="KW-0665">Pyrimidine biosynthesis</keyword>
<keyword id="KW-1185">Reference proteome</keyword>
<keyword id="KW-0808">Transferase</keyword>
<accession>Q7VDV6</accession>
<proteinExistence type="inferred from homology"/>
<gene>
    <name evidence="1" type="primary">pyrB</name>
    <name type="ordered locus">Pro_0262</name>
</gene>
<reference key="1">
    <citation type="journal article" date="2003" name="Proc. Natl. Acad. Sci. U.S.A.">
        <title>Genome sequence of the cyanobacterium Prochlorococcus marinus SS120, a nearly minimal oxyphototrophic genome.</title>
        <authorList>
            <person name="Dufresne A."/>
            <person name="Salanoubat M."/>
            <person name="Partensky F."/>
            <person name="Artiguenave F."/>
            <person name="Axmann I.M."/>
            <person name="Barbe V."/>
            <person name="Duprat S."/>
            <person name="Galperin M.Y."/>
            <person name="Koonin E.V."/>
            <person name="Le Gall F."/>
            <person name="Makarova K.S."/>
            <person name="Ostrowski M."/>
            <person name="Oztas S."/>
            <person name="Robert C."/>
            <person name="Rogozin I.B."/>
            <person name="Scanlan D.J."/>
            <person name="Tandeau de Marsac N."/>
            <person name="Weissenbach J."/>
            <person name="Wincker P."/>
            <person name="Wolf Y.I."/>
            <person name="Hess W.R."/>
        </authorList>
    </citation>
    <scope>NUCLEOTIDE SEQUENCE [LARGE SCALE GENOMIC DNA]</scope>
    <source>
        <strain>SARG / CCMP1375 / SS120</strain>
    </source>
</reference>
<feature type="chain" id="PRO_0000113173" description="Aspartate carbamoyltransferase catalytic subunit">
    <location>
        <begin position="1"/>
        <end position="338"/>
    </location>
</feature>
<feature type="binding site" evidence="1">
    <location>
        <position position="59"/>
    </location>
    <ligand>
        <name>carbamoyl phosphate</name>
        <dbReference type="ChEBI" id="CHEBI:58228"/>
    </ligand>
</feature>
<feature type="binding site" evidence="1">
    <location>
        <position position="60"/>
    </location>
    <ligand>
        <name>carbamoyl phosphate</name>
        <dbReference type="ChEBI" id="CHEBI:58228"/>
    </ligand>
</feature>
<feature type="binding site" evidence="1">
    <location>
        <position position="87"/>
    </location>
    <ligand>
        <name>L-aspartate</name>
        <dbReference type="ChEBI" id="CHEBI:29991"/>
    </ligand>
</feature>
<feature type="binding site" evidence="1">
    <location>
        <position position="109"/>
    </location>
    <ligand>
        <name>carbamoyl phosphate</name>
        <dbReference type="ChEBI" id="CHEBI:58228"/>
    </ligand>
</feature>
<feature type="binding site" evidence="1">
    <location>
        <position position="142"/>
    </location>
    <ligand>
        <name>carbamoyl phosphate</name>
        <dbReference type="ChEBI" id="CHEBI:58228"/>
    </ligand>
</feature>
<feature type="binding site" evidence="1">
    <location>
        <position position="145"/>
    </location>
    <ligand>
        <name>carbamoyl phosphate</name>
        <dbReference type="ChEBI" id="CHEBI:58228"/>
    </ligand>
</feature>
<feature type="binding site" evidence="1">
    <location>
        <position position="182"/>
    </location>
    <ligand>
        <name>L-aspartate</name>
        <dbReference type="ChEBI" id="CHEBI:29991"/>
    </ligand>
</feature>
<feature type="binding site" evidence="1">
    <location>
        <position position="253"/>
    </location>
    <ligand>
        <name>L-aspartate</name>
        <dbReference type="ChEBI" id="CHEBI:29991"/>
    </ligand>
</feature>
<feature type="binding site" evidence="1">
    <location>
        <position position="294"/>
    </location>
    <ligand>
        <name>carbamoyl phosphate</name>
        <dbReference type="ChEBI" id="CHEBI:58228"/>
    </ligand>
</feature>
<feature type="binding site" evidence="1">
    <location>
        <position position="295"/>
    </location>
    <ligand>
        <name>carbamoyl phosphate</name>
        <dbReference type="ChEBI" id="CHEBI:58228"/>
    </ligand>
</feature>
<dbReference type="EC" id="2.1.3.2" evidence="1"/>
<dbReference type="EMBL" id="AE017126">
    <property type="protein sequence ID" value="AAP99308.1"/>
    <property type="molecule type" value="Genomic_DNA"/>
</dbReference>
<dbReference type="RefSeq" id="NP_874656.1">
    <property type="nucleotide sequence ID" value="NC_005042.1"/>
</dbReference>
<dbReference type="RefSeq" id="WP_011124417.1">
    <property type="nucleotide sequence ID" value="NC_005042.1"/>
</dbReference>
<dbReference type="SMR" id="Q7VDV6"/>
<dbReference type="STRING" id="167539.Pro_0262"/>
<dbReference type="EnsemblBacteria" id="AAP99308">
    <property type="protein sequence ID" value="AAP99308"/>
    <property type="gene ID" value="Pro_0262"/>
</dbReference>
<dbReference type="KEGG" id="pma:Pro_0262"/>
<dbReference type="PATRIC" id="fig|167539.5.peg.270"/>
<dbReference type="eggNOG" id="COG0540">
    <property type="taxonomic scope" value="Bacteria"/>
</dbReference>
<dbReference type="HOGENOM" id="CLU_043846_2_0_3"/>
<dbReference type="OrthoDB" id="9774690at2"/>
<dbReference type="UniPathway" id="UPA00070">
    <property type="reaction ID" value="UER00116"/>
</dbReference>
<dbReference type="Proteomes" id="UP000001420">
    <property type="component" value="Chromosome"/>
</dbReference>
<dbReference type="GO" id="GO:0005829">
    <property type="term" value="C:cytosol"/>
    <property type="evidence" value="ECO:0007669"/>
    <property type="project" value="TreeGrafter"/>
</dbReference>
<dbReference type="GO" id="GO:0016597">
    <property type="term" value="F:amino acid binding"/>
    <property type="evidence" value="ECO:0007669"/>
    <property type="project" value="InterPro"/>
</dbReference>
<dbReference type="GO" id="GO:0004070">
    <property type="term" value="F:aspartate carbamoyltransferase activity"/>
    <property type="evidence" value="ECO:0007669"/>
    <property type="project" value="UniProtKB-UniRule"/>
</dbReference>
<dbReference type="GO" id="GO:0006207">
    <property type="term" value="P:'de novo' pyrimidine nucleobase biosynthetic process"/>
    <property type="evidence" value="ECO:0007669"/>
    <property type="project" value="InterPro"/>
</dbReference>
<dbReference type="GO" id="GO:0044205">
    <property type="term" value="P:'de novo' UMP biosynthetic process"/>
    <property type="evidence" value="ECO:0007669"/>
    <property type="project" value="UniProtKB-UniRule"/>
</dbReference>
<dbReference type="GO" id="GO:0006520">
    <property type="term" value="P:amino acid metabolic process"/>
    <property type="evidence" value="ECO:0007669"/>
    <property type="project" value="InterPro"/>
</dbReference>
<dbReference type="Gene3D" id="3.40.50.1370">
    <property type="entry name" value="Aspartate/ornithine carbamoyltransferase"/>
    <property type="match status" value="2"/>
</dbReference>
<dbReference type="HAMAP" id="MF_00001">
    <property type="entry name" value="Asp_carb_tr"/>
    <property type="match status" value="1"/>
</dbReference>
<dbReference type="InterPro" id="IPR006132">
    <property type="entry name" value="Asp/Orn_carbamoyltranf_P-bd"/>
</dbReference>
<dbReference type="InterPro" id="IPR006130">
    <property type="entry name" value="Asp/Orn_carbamoylTrfase"/>
</dbReference>
<dbReference type="InterPro" id="IPR036901">
    <property type="entry name" value="Asp/Orn_carbamoylTrfase_sf"/>
</dbReference>
<dbReference type="InterPro" id="IPR002082">
    <property type="entry name" value="Asp_carbamoyltransf"/>
</dbReference>
<dbReference type="InterPro" id="IPR006131">
    <property type="entry name" value="Asp_carbamoyltransf_Asp/Orn-bd"/>
</dbReference>
<dbReference type="NCBIfam" id="TIGR00670">
    <property type="entry name" value="asp_carb_tr"/>
    <property type="match status" value="1"/>
</dbReference>
<dbReference type="NCBIfam" id="NF002032">
    <property type="entry name" value="PRK00856.1"/>
    <property type="match status" value="1"/>
</dbReference>
<dbReference type="PANTHER" id="PTHR45753:SF6">
    <property type="entry name" value="ASPARTATE CARBAMOYLTRANSFERASE"/>
    <property type="match status" value="1"/>
</dbReference>
<dbReference type="PANTHER" id="PTHR45753">
    <property type="entry name" value="ORNITHINE CARBAMOYLTRANSFERASE, MITOCHONDRIAL"/>
    <property type="match status" value="1"/>
</dbReference>
<dbReference type="Pfam" id="PF00185">
    <property type="entry name" value="OTCace"/>
    <property type="match status" value="1"/>
</dbReference>
<dbReference type="Pfam" id="PF02729">
    <property type="entry name" value="OTCace_N"/>
    <property type="match status" value="1"/>
</dbReference>
<dbReference type="PRINTS" id="PR00100">
    <property type="entry name" value="AOTCASE"/>
</dbReference>
<dbReference type="PRINTS" id="PR00101">
    <property type="entry name" value="ATCASE"/>
</dbReference>
<dbReference type="SUPFAM" id="SSF53671">
    <property type="entry name" value="Aspartate/ornithine carbamoyltransferase"/>
    <property type="match status" value="1"/>
</dbReference>
<dbReference type="PROSITE" id="PS00097">
    <property type="entry name" value="CARBAMOYLTRANSFERASE"/>
    <property type="match status" value="1"/>
</dbReference>